<reference key="1">
    <citation type="submission" date="2007-02" db="EMBL/GenBank/DDBJ databases">
        <title>Complete sequence of chromosome of Yersinia pestis Pestoides F.</title>
        <authorList>
            <consortium name="US DOE Joint Genome Institute"/>
            <person name="Copeland A."/>
            <person name="Lucas S."/>
            <person name="Lapidus A."/>
            <person name="Barry K."/>
            <person name="Detter J.C."/>
            <person name="Glavina del Rio T."/>
            <person name="Hammon N."/>
            <person name="Israni S."/>
            <person name="Dalin E."/>
            <person name="Tice H."/>
            <person name="Pitluck S."/>
            <person name="Di Bartolo G."/>
            <person name="Chain P."/>
            <person name="Malfatti S."/>
            <person name="Shin M."/>
            <person name="Vergez L."/>
            <person name="Schmutz J."/>
            <person name="Larimer F."/>
            <person name="Land M."/>
            <person name="Hauser L."/>
            <person name="Worsham P."/>
            <person name="Chu M."/>
            <person name="Bearden S."/>
            <person name="Garcia E."/>
            <person name="Richardson P."/>
        </authorList>
    </citation>
    <scope>NUCLEOTIDE SEQUENCE [LARGE SCALE GENOMIC DNA]</scope>
    <source>
        <strain>Pestoides F</strain>
    </source>
</reference>
<sequence>MASPLSPGSRILIGLIRGYQLVISPLLGPRCRFHPTCSHYGIEALRRFGMIKGSWLTLKRVLKCHPLNSGGDDPVPPKLDDNREH</sequence>
<proteinExistence type="inferred from homology"/>
<gene>
    <name type="ordered locus">YPDSF_3933</name>
</gene>
<protein>
    <recommendedName>
        <fullName evidence="1">Putative membrane protein insertion efficiency factor</fullName>
    </recommendedName>
</protein>
<feature type="chain" id="PRO_1000013144" description="Putative membrane protein insertion efficiency factor">
    <location>
        <begin position="1"/>
        <end position="85"/>
    </location>
</feature>
<feature type="region of interest" description="Disordered" evidence="2">
    <location>
        <begin position="66"/>
        <end position="85"/>
    </location>
</feature>
<comment type="function">
    <text evidence="1">Could be involved in insertion of integral membrane proteins into the membrane.</text>
</comment>
<comment type="subcellular location">
    <subcellularLocation>
        <location evidence="1">Cell inner membrane</location>
        <topology evidence="1">Peripheral membrane protein</topology>
        <orientation evidence="1">Cytoplasmic side</orientation>
    </subcellularLocation>
</comment>
<comment type="similarity">
    <text evidence="1">Belongs to the UPF0161 family.</text>
</comment>
<accession>A4TSL2</accession>
<dbReference type="EMBL" id="CP000668">
    <property type="protein sequence ID" value="ABP42274.1"/>
    <property type="molecule type" value="Genomic_DNA"/>
</dbReference>
<dbReference type="KEGG" id="ypp:YPDSF_3933"/>
<dbReference type="PATRIC" id="fig|386656.14.peg.582"/>
<dbReference type="GO" id="GO:0005886">
    <property type="term" value="C:plasma membrane"/>
    <property type="evidence" value="ECO:0007669"/>
    <property type="project" value="UniProtKB-SubCell"/>
</dbReference>
<dbReference type="HAMAP" id="MF_00386">
    <property type="entry name" value="UPF0161_YidD"/>
    <property type="match status" value="1"/>
</dbReference>
<dbReference type="InterPro" id="IPR002696">
    <property type="entry name" value="Membr_insert_effic_factor_YidD"/>
</dbReference>
<dbReference type="NCBIfam" id="TIGR00278">
    <property type="entry name" value="membrane protein insertion efficiency factor YidD"/>
    <property type="match status" value="1"/>
</dbReference>
<dbReference type="PANTHER" id="PTHR33383">
    <property type="entry name" value="MEMBRANE PROTEIN INSERTION EFFICIENCY FACTOR-RELATED"/>
    <property type="match status" value="1"/>
</dbReference>
<dbReference type="PANTHER" id="PTHR33383:SF1">
    <property type="entry name" value="MEMBRANE PROTEIN INSERTION EFFICIENCY FACTOR-RELATED"/>
    <property type="match status" value="1"/>
</dbReference>
<dbReference type="Pfam" id="PF01809">
    <property type="entry name" value="YidD"/>
    <property type="match status" value="1"/>
</dbReference>
<dbReference type="SMART" id="SM01234">
    <property type="entry name" value="Haemolytic"/>
    <property type="match status" value="1"/>
</dbReference>
<organism>
    <name type="scientific">Yersinia pestis (strain Pestoides F)</name>
    <dbReference type="NCBI Taxonomy" id="386656"/>
    <lineage>
        <taxon>Bacteria</taxon>
        <taxon>Pseudomonadati</taxon>
        <taxon>Pseudomonadota</taxon>
        <taxon>Gammaproteobacteria</taxon>
        <taxon>Enterobacterales</taxon>
        <taxon>Yersiniaceae</taxon>
        <taxon>Yersinia</taxon>
    </lineage>
</organism>
<name>YIDD_YERPP</name>
<keyword id="KW-0997">Cell inner membrane</keyword>
<keyword id="KW-1003">Cell membrane</keyword>
<keyword id="KW-0472">Membrane</keyword>
<evidence type="ECO:0000255" key="1">
    <source>
        <dbReference type="HAMAP-Rule" id="MF_00386"/>
    </source>
</evidence>
<evidence type="ECO:0000256" key="2">
    <source>
        <dbReference type="SAM" id="MobiDB-lite"/>
    </source>
</evidence>